<sequence>MSALFPSLFPRVTESLWFNLDRPCVDEAELNQQEQQHQTWLQSIVEKDNNLMPIGRPIFETFDEEEEEDDEDEEDSEEDSEDDEDMQDMDDMNIYNEFPDDGEINEVDMEGADQDQDQWMI</sequence>
<accession>F1QY75</accession>
<accession>Q0P441</accession>
<name>APC15_DANRE</name>
<organism>
    <name type="scientific">Danio rerio</name>
    <name type="common">Zebrafish</name>
    <name type="synonym">Brachydanio rerio</name>
    <dbReference type="NCBI Taxonomy" id="7955"/>
    <lineage>
        <taxon>Eukaryota</taxon>
        <taxon>Metazoa</taxon>
        <taxon>Chordata</taxon>
        <taxon>Craniata</taxon>
        <taxon>Vertebrata</taxon>
        <taxon>Euteleostomi</taxon>
        <taxon>Actinopterygii</taxon>
        <taxon>Neopterygii</taxon>
        <taxon>Teleostei</taxon>
        <taxon>Ostariophysi</taxon>
        <taxon>Cypriniformes</taxon>
        <taxon>Danionidae</taxon>
        <taxon>Danioninae</taxon>
        <taxon>Danio</taxon>
    </lineage>
</organism>
<comment type="function">
    <text evidence="1">Component of the anaphase promoting complex/cyclosome (APC/C), a cell cycle-regulated E3 ubiquitin ligase that controls progression through mitosis and the G1 phase of the cell cycle. The APC/C complex catalyzes assembly of branched 'Lys-11'-/'Lys-48'-linked branched ubiquitin chains on target proteins.</text>
</comment>
<comment type="pathway">
    <text evidence="1">Protein modification; protein ubiquitination.</text>
</comment>
<comment type="subunit">
    <text evidence="1">The APC/C is composed of at least 12 subunits.</text>
</comment>
<comment type="similarity">
    <text evidence="3">Belongs to the APC15 family.</text>
</comment>
<gene>
    <name type="primary">anapc15</name>
    <name type="ORF">zgc:153425</name>
</gene>
<protein>
    <recommendedName>
        <fullName>Anaphase-promoting complex subunit 15</fullName>
        <shortName>APC15</shortName>
    </recommendedName>
</protein>
<evidence type="ECO:0000250" key="1">
    <source>
        <dbReference type="UniProtKB" id="P60006"/>
    </source>
</evidence>
<evidence type="ECO:0000256" key="2">
    <source>
        <dbReference type="SAM" id="MobiDB-lite"/>
    </source>
</evidence>
<evidence type="ECO:0000305" key="3"/>
<keyword id="KW-0131">Cell cycle</keyword>
<keyword id="KW-0132">Cell division</keyword>
<keyword id="KW-0498">Mitosis</keyword>
<keyword id="KW-1185">Reference proteome</keyword>
<proteinExistence type="evidence at transcript level"/>
<feature type="chain" id="PRO_0000417539" description="Anaphase-promoting complex subunit 15">
    <location>
        <begin position="1"/>
        <end position="121"/>
    </location>
</feature>
<feature type="region of interest" description="Disordered" evidence="2">
    <location>
        <begin position="52"/>
        <end position="121"/>
    </location>
</feature>
<feature type="compositionally biased region" description="Acidic residues" evidence="2">
    <location>
        <begin position="61"/>
        <end position="91"/>
    </location>
</feature>
<feature type="compositionally biased region" description="Acidic residues" evidence="2">
    <location>
        <begin position="98"/>
        <end position="121"/>
    </location>
</feature>
<feature type="sequence conflict" description="In Ref. 2; AAI22288." evidence="3" ref="2">
    <original>N</original>
    <variation>D</variation>
    <location>
        <position position="19"/>
    </location>
</feature>
<dbReference type="EMBL" id="CABZ01088540">
    <property type="status" value="NOT_ANNOTATED_CDS"/>
    <property type="molecule type" value="Genomic_DNA"/>
</dbReference>
<dbReference type="EMBL" id="CABZ01088541">
    <property type="status" value="NOT_ANNOTATED_CDS"/>
    <property type="molecule type" value="Genomic_DNA"/>
</dbReference>
<dbReference type="EMBL" id="BC122287">
    <property type="protein sequence ID" value="AAI22288.1"/>
    <property type="molecule type" value="mRNA"/>
</dbReference>
<dbReference type="RefSeq" id="NP_001038915.1">
    <property type="nucleotide sequence ID" value="NM_001045450.1"/>
</dbReference>
<dbReference type="RefSeq" id="XP_017206505.1">
    <property type="nucleotide sequence ID" value="XM_017351016.1"/>
</dbReference>
<dbReference type="RefSeq" id="XP_068069685.1">
    <property type="nucleotide sequence ID" value="XM_068213584.1"/>
</dbReference>
<dbReference type="SMR" id="F1QY75"/>
<dbReference type="FunCoup" id="F1QY75">
    <property type="interactions" value="1582"/>
</dbReference>
<dbReference type="PaxDb" id="7955-ENSDARP00000105664"/>
<dbReference type="Ensembl" id="ENSDART00000164983">
    <property type="protein sequence ID" value="ENSDARP00000139654"/>
    <property type="gene ID" value="ENSDARG00000101285"/>
</dbReference>
<dbReference type="Ensembl" id="ENSDART00000176289">
    <property type="protein sequence ID" value="ENSDARP00000143478"/>
    <property type="gene ID" value="ENSDARG00000101285"/>
</dbReference>
<dbReference type="GeneID" id="751740"/>
<dbReference type="KEGG" id="dre:751740"/>
<dbReference type="AGR" id="ZFIN:ZDB-GENE-060825-43"/>
<dbReference type="CTD" id="25906"/>
<dbReference type="ZFIN" id="ZDB-GENE-060825-43">
    <property type="gene designation" value="anapc15"/>
</dbReference>
<dbReference type="eggNOG" id="ENOG502RZUK">
    <property type="taxonomic scope" value="Eukaryota"/>
</dbReference>
<dbReference type="HOGENOM" id="CLU_142923_0_0_1"/>
<dbReference type="InParanoid" id="F1QY75"/>
<dbReference type="OrthoDB" id="6362917at2759"/>
<dbReference type="UniPathway" id="UPA00143"/>
<dbReference type="PRO" id="PR:F1QY75"/>
<dbReference type="Proteomes" id="UP000000437">
    <property type="component" value="Chromosome 15"/>
</dbReference>
<dbReference type="Bgee" id="ENSDARG00000101285">
    <property type="expression patterns" value="Expressed in testis and 26 other cell types or tissues"/>
</dbReference>
<dbReference type="ExpressionAtlas" id="F1QY75">
    <property type="expression patterns" value="baseline and differential"/>
</dbReference>
<dbReference type="GO" id="GO:0005680">
    <property type="term" value="C:anaphase-promoting complex"/>
    <property type="evidence" value="ECO:0000250"/>
    <property type="project" value="UniProtKB"/>
</dbReference>
<dbReference type="GO" id="GO:0031145">
    <property type="term" value="P:anaphase-promoting complex-dependent catabolic process"/>
    <property type="evidence" value="ECO:0000250"/>
    <property type="project" value="UniProtKB"/>
</dbReference>
<dbReference type="GO" id="GO:0051301">
    <property type="term" value="P:cell division"/>
    <property type="evidence" value="ECO:0007669"/>
    <property type="project" value="UniProtKB-KW"/>
</dbReference>
<dbReference type="GO" id="GO:0141198">
    <property type="term" value="P:protein branched polyubiquitination"/>
    <property type="evidence" value="ECO:0000250"/>
    <property type="project" value="UniProtKB"/>
</dbReference>
<dbReference type="GO" id="GO:0070979">
    <property type="term" value="P:protein K11-linked ubiquitination"/>
    <property type="evidence" value="ECO:0000250"/>
    <property type="project" value="UniProtKB"/>
</dbReference>
<dbReference type="GO" id="GO:0070936">
    <property type="term" value="P:protein K48-linked ubiquitination"/>
    <property type="evidence" value="ECO:0000250"/>
    <property type="project" value="UniProtKB"/>
</dbReference>
<dbReference type="GO" id="GO:0090266">
    <property type="term" value="P:regulation of mitotic cell cycle spindle assembly checkpoint"/>
    <property type="evidence" value="ECO:0000250"/>
    <property type="project" value="UniProtKB"/>
</dbReference>
<dbReference type="InterPro" id="IPR026182">
    <property type="entry name" value="ANAPC15"/>
</dbReference>
<dbReference type="PANTHER" id="PTHR22526">
    <property type="entry name" value="ANAPHASE PROMOTING COMPLEX C SUBUNIT 15, PSEUDOGENE-RELATED"/>
    <property type="match status" value="1"/>
</dbReference>
<dbReference type="PANTHER" id="PTHR22526:SF2">
    <property type="entry name" value="ANAPHASE PROMOTING COMPLEX C SUBUNIT 15, PSEUDOGENE-RELATED"/>
    <property type="match status" value="1"/>
</dbReference>
<dbReference type="Pfam" id="PF15243">
    <property type="entry name" value="ANAPC15"/>
    <property type="match status" value="1"/>
</dbReference>
<reference key="1">
    <citation type="journal article" date="2013" name="Nature">
        <title>The zebrafish reference genome sequence and its relationship to the human genome.</title>
        <authorList>
            <person name="Howe K."/>
            <person name="Clark M.D."/>
            <person name="Torroja C.F."/>
            <person name="Torrance J."/>
            <person name="Berthelot C."/>
            <person name="Muffato M."/>
            <person name="Collins J.E."/>
            <person name="Humphray S."/>
            <person name="McLaren K."/>
            <person name="Matthews L."/>
            <person name="McLaren S."/>
            <person name="Sealy I."/>
            <person name="Caccamo M."/>
            <person name="Churcher C."/>
            <person name="Scott C."/>
            <person name="Barrett J.C."/>
            <person name="Koch R."/>
            <person name="Rauch G.J."/>
            <person name="White S."/>
            <person name="Chow W."/>
            <person name="Kilian B."/>
            <person name="Quintais L.T."/>
            <person name="Guerra-Assuncao J.A."/>
            <person name="Zhou Y."/>
            <person name="Gu Y."/>
            <person name="Yen J."/>
            <person name="Vogel J.H."/>
            <person name="Eyre T."/>
            <person name="Redmond S."/>
            <person name="Banerjee R."/>
            <person name="Chi J."/>
            <person name="Fu B."/>
            <person name="Langley E."/>
            <person name="Maguire S.F."/>
            <person name="Laird G.K."/>
            <person name="Lloyd D."/>
            <person name="Kenyon E."/>
            <person name="Donaldson S."/>
            <person name="Sehra H."/>
            <person name="Almeida-King J."/>
            <person name="Loveland J."/>
            <person name="Trevanion S."/>
            <person name="Jones M."/>
            <person name="Quail M."/>
            <person name="Willey D."/>
            <person name="Hunt A."/>
            <person name="Burton J."/>
            <person name="Sims S."/>
            <person name="McLay K."/>
            <person name="Plumb B."/>
            <person name="Davis J."/>
            <person name="Clee C."/>
            <person name="Oliver K."/>
            <person name="Clark R."/>
            <person name="Riddle C."/>
            <person name="Elliot D."/>
            <person name="Threadgold G."/>
            <person name="Harden G."/>
            <person name="Ware D."/>
            <person name="Begum S."/>
            <person name="Mortimore B."/>
            <person name="Kerry G."/>
            <person name="Heath P."/>
            <person name="Phillimore B."/>
            <person name="Tracey A."/>
            <person name="Corby N."/>
            <person name="Dunn M."/>
            <person name="Johnson C."/>
            <person name="Wood J."/>
            <person name="Clark S."/>
            <person name="Pelan S."/>
            <person name="Griffiths G."/>
            <person name="Smith M."/>
            <person name="Glithero R."/>
            <person name="Howden P."/>
            <person name="Barker N."/>
            <person name="Lloyd C."/>
            <person name="Stevens C."/>
            <person name="Harley J."/>
            <person name="Holt K."/>
            <person name="Panagiotidis G."/>
            <person name="Lovell J."/>
            <person name="Beasley H."/>
            <person name="Henderson C."/>
            <person name="Gordon D."/>
            <person name="Auger K."/>
            <person name="Wright D."/>
            <person name="Collins J."/>
            <person name="Raisen C."/>
            <person name="Dyer L."/>
            <person name="Leung K."/>
            <person name="Robertson L."/>
            <person name="Ambridge K."/>
            <person name="Leongamornlert D."/>
            <person name="McGuire S."/>
            <person name="Gilderthorp R."/>
            <person name="Griffiths C."/>
            <person name="Manthravadi D."/>
            <person name="Nichol S."/>
            <person name="Barker G."/>
            <person name="Whitehead S."/>
            <person name="Kay M."/>
            <person name="Brown J."/>
            <person name="Murnane C."/>
            <person name="Gray E."/>
            <person name="Humphries M."/>
            <person name="Sycamore N."/>
            <person name="Barker D."/>
            <person name="Saunders D."/>
            <person name="Wallis J."/>
            <person name="Babbage A."/>
            <person name="Hammond S."/>
            <person name="Mashreghi-Mohammadi M."/>
            <person name="Barr L."/>
            <person name="Martin S."/>
            <person name="Wray P."/>
            <person name="Ellington A."/>
            <person name="Matthews N."/>
            <person name="Ellwood M."/>
            <person name="Woodmansey R."/>
            <person name="Clark G."/>
            <person name="Cooper J."/>
            <person name="Tromans A."/>
            <person name="Grafham D."/>
            <person name="Skuce C."/>
            <person name="Pandian R."/>
            <person name="Andrews R."/>
            <person name="Harrison E."/>
            <person name="Kimberley A."/>
            <person name="Garnett J."/>
            <person name="Fosker N."/>
            <person name="Hall R."/>
            <person name="Garner P."/>
            <person name="Kelly D."/>
            <person name="Bird C."/>
            <person name="Palmer S."/>
            <person name="Gehring I."/>
            <person name="Berger A."/>
            <person name="Dooley C.M."/>
            <person name="Ersan-Urun Z."/>
            <person name="Eser C."/>
            <person name="Geiger H."/>
            <person name="Geisler M."/>
            <person name="Karotki L."/>
            <person name="Kirn A."/>
            <person name="Konantz J."/>
            <person name="Konantz M."/>
            <person name="Oberlander M."/>
            <person name="Rudolph-Geiger S."/>
            <person name="Teucke M."/>
            <person name="Lanz C."/>
            <person name="Raddatz G."/>
            <person name="Osoegawa K."/>
            <person name="Zhu B."/>
            <person name="Rapp A."/>
            <person name="Widaa S."/>
            <person name="Langford C."/>
            <person name="Yang F."/>
            <person name="Schuster S.C."/>
            <person name="Carter N.P."/>
            <person name="Harrow J."/>
            <person name="Ning Z."/>
            <person name="Herrero J."/>
            <person name="Searle S.M."/>
            <person name="Enright A."/>
            <person name="Geisler R."/>
            <person name="Plasterk R.H."/>
            <person name="Lee C."/>
            <person name="Westerfield M."/>
            <person name="de Jong P.J."/>
            <person name="Zon L.I."/>
            <person name="Postlethwait J.H."/>
            <person name="Nusslein-Volhard C."/>
            <person name="Hubbard T.J."/>
            <person name="Roest Crollius H."/>
            <person name="Rogers J."/>
            <person name="Stemple D.L."/>
        </authorList>
    </citation>
    <scope>NUCLEOTIDE SEQUENCE [LARGE SCALE GENOMIC DNA]</scope>
    <source>
        <strain>Tuebingen</strain>
    </source>
</reference>
<reference key="2">
    <citation type="submission" date="2006-08" db="EMBL/GenBank/DDBJ databases">
        <authorList>
            <consortium name="NIH - Zebrafish Gene Collection (ZGC) project"/>
        </authorList>
    </citation>
    <scope>NUCLEOTIDE SEQUENCE [LARGE SCALE MRNA]</scope>
    <source>
        <tissue>Eye</tissue>
    </source>
</reference>